<gene>
    <name evidence="1" type="primary">ecfA2</name>
    <name type="synonym">cbiO2</name>
    <name type="ordered locus">BT9727_0135</name>
</gene>
<organism>
    <name type="scientific">Bacillus thuringiensis subsp. konkukian (strain 97-27)</name>
    <dbReference type="NCBI Taxonomy" id="281309"/>
    <lineage>
        <taxon>Bacteria</taxon>
        <taxon>Bacillati</taxon>
        <taxon>Bacillota</taxon>
        <taxon>Bacilli</taxon>
        <taxon>Bacillales</taxon>
        <taxon>Bacillaceae</taxon>
        <taxon>Bacillus</taxon>
        <taxon>Bacillus cereus group</taxon>
    </lineage>
</organism>
<protein>
    <recommendedName>
        <fullName evidence="1">Energy-coupling factor transporter ATP-binding protein EcfA2</fullName>
        <shortName evidence="1">ECF transporter A component EcfA2</shortName>
        <ecNumber evidence="1">7.-.-.-</ecNumber>
    </recommendedName>
</protein>
<dbReference type="EC" id="7.-.-.-" evidence="1"/>
<dbReference type="EMBL" id="AE017355">
    <property type="protein sequence ID" value="AAT61431.1"/>
    <property type="molecule type" value="Genomic_DNA"/>
</dbReference>
<dbReference type="RefSeq" id="WP_000406513.1">
    <property type="nucleotide sequence ID" value="NC_005957.1"/>
</dbReference>
<dbReference type="RefSeq" id="YP_034491.1">
    <property type="nucleotide sequence ID" value="NC_005957.1"/>
</dbReference>
<dbReference type="SMR" id="Q6HPM9"/>
<dbReference type="KEGG" id="btk:BT9727_0135"/>
<dbReference type="PATRIC" id="fig|281309.8.peg.137"/>
<dbReference type="HOGENOM" id="CLU_000604_1_22_9"/>
<dbReference type="Proteomes" id="UP000001301">
    <property type="component" value="Chromosome"/>
</dbReference>
<dbReference type="GO" id="GO:0043190">
    <property type="term" value="C:ATP-binding cassette (ABC) transporter complex"/>
    <property type="evidence" value="ECO:0007669"/>
    <property type="project" value="TreeGrafter"/>
</dbReference>
<dbReference type="GO" id="GO:0005524">
    <property type="term" value="F:ATP binding"/>
    <property type="evidence" value="ECO:0007669"/>
    <property type="project" value="UniProtKB-KW"/>
</dbReference>
<dbReference type="GO" id="GO:0016887">
    <property type="term" value="F:ATP hydrolysis activity"/>
    <property type="evidence" value="ECO:0007669"/>
    <property type="project" value="InterPro"/>
</dbReference>
<dbReference type="GO" id="GO:0042626">
    <property type="term" value="F:ATPase-coupled transmembrane transporter activity"/>
    <property type="evidence" value="ECO:0007669"/>
    <property type="project" value="TreeGrafter"/>
</dbReference>
<dbReference type="CDD" id="cd03225">
    <property type="entry name" value="ABC_cobalt_CbiO_domain1"/>
    <property type="match status" value="1"/>
</dbReference>
<dbReference type="FunFam" id="3.40.50.300:FF:000224">
    <property type="entry name" value="Energy-coupling factor transporter ATP-binding protein EcfA"/>
    <property type="match status" value="1"/>
</dbReference>
<dbReference type="Gene3D" id="3.40.50.300">
    <property type="entry name" value="P-loop containing nucleotide triphosphate hydrolases"/>
    <property type="match status" value="1"/>
</dbReference>
<dbReference type="InterPro" id="IPR003593">
    <property type="entry name" value="AAA+_ATPase"/>
</dbReference>
<dbReference type="InterPro" id="IPR003439">
    <property type="entry name" value="ABC_transporter-like_ATP-bd"/>
</dbReference>
<dbReference type="InterPro" id="IPR017871">
    <property type="entry name" value="ABC_transporter-like_CS"/>
</dbReference>
<dbReference type="InterPro" id="IPR015856">
    <property type="entry name" value="ABC_transpr_CbiO/EcfA_su"/>
</dbReference>
<dbReference type="InterPro" id="IPR050095">
    <property type="entry name" value="ECF_ABC_transporter_ATP-bd"/>
</dbReference>
<dbReference type="InterPro" id="IPR030946">
    <property type="entry name" value="EcfA2"/>
</dbReference>
<dbReference type="InterPro" id="IPR027417">
    <property type="entry name" value="P-loop_NTPase"/>
</dbReference>
<dbReference type="NCBIfam" id="TIGR04521">
    <property type="entry name" value="ECF_ATPase_2"/>
    <property type="match status" value="1"/>
</dbReference>
<dbReference type="NCBIfam" id="NF010155">
    <property type="entry name" value="PRK13634.1"/>
    <property type="match status" value="1"/>
</dbReference>
<dbReference type="PANTHER" id="PTHR43553:SF27">
    <property type="entry name" value="ENERGY-COUPLING FACTOR TRANSPORTER ATP-BINDING PROTEIN ECFA2"/>
    <property type="match status" value="1"/>
</dbReference>
<dbReference type="PANTHER" id="PTHR43553">
    <property type="entry name" value="HEAVY METAL TRANSPORTER"/>
    <property type="match status" value="1"/>
</dbReference>
<dbReference type="Pfam" id="PF00005">
    <property type="entry name" value="ABC_tran"/>
    <property type="match status" value="1"/>
</dbReference>
<dbReference type="SMART" id="SM00382">
    <property type="entry name" value="AAA"/>
    <property type="match status" value="1"/>
</dbReference>
<dbReference type="SUPFAM" id="SSF52540">
    <property type="entry name" value="P-loop containing nucleoside triphosphate hydrolases"/>
    <property type="match status" value="1"/>
</dbReference>
<dbReference type="PROSITE" id="PS00211">
    <property type="entry name" value="ABC_TRANSPORTER_1"/>
    <property type="match status" value="1"/>
</dbReference>
<dbReference type="PROSITE" id="PS50893">
    <property type="entry name" value="ABC_TRANSPORTER_2"/>
    <property type="match status" value="1"/>
</dbReference>
<dbReference type="PROSITE" id="PS51246">
    <property type="entry name" value="CBIO"/>
    <property type="match status" value="1"/>
</dbReference>
<feature type="chain" id="PRO_0000091983" description="Energy-coupling factor transporter ATP-binding protein EcfA2">
    <location>
        <begin position="1"/>
        <end position="293"/>
    </location>
</feature>
<feature type="domain" description="ABC transporter" evidence="1">
    <location>
        <begin position="3"/>
        <end position="246"/>
    </location>
</feature>
<feature type="binding site" evidence="1">
    <location>
        <begin position="40"/>
        <end position="47"/>
    </location>
    <ligand>
        <name>ATP</name>
        <dbReference type="ChEBI" id="CHEBI:30616"/>
    </ligand>
</feature>
<accession>Q6HPM9</accession>
<keyword id="KW-0067">ATP-binding</keyword>
<keyword id="KW-1003">Cell membrane</keyword>
<keyword id="KW-0472">Membrane</keyword>
<keyword id="KW-0547">Nucleotide-binding</keyword>
<keyword id="KW-1278">Translocase</keyword>
<keyword id="KW-0813">Transport</keyword>
<reference key="1">
    <citation type="journal article" date="2006" name="J. Bacteriol.">
        <title>Pathogenomic sequence analysis of Bacillus cereus and Bacillus thuringiensis isolates closely related to Bacillus anthracis.</title>
        <authorList>
            <person name="Han C.S."/>
            <person name="Xie G."/>
            <person name="Challacombe J.F."/>
            <person name="Altherr M.R."/>
            <person name="Bhotika S.S."/>
            <person name="Bruce D."/>
            <person name="Campbell C.S."/>
            <person name="Campbell M.L."/>
            <person name="Chen J."/>
            <person name="Chertkov O."/>
            <person name="Cleland C."/>
            <person name="Dimitrijevic M."/>
            <person name="Doggett N.A."/>
            <person name="Fawcett J.J."/>
            <person name="Glavina T."/>
            <person name="Goodwin L.A."/>
            <person name="Hill K.K."/>
            <person name="Hitchcock P."/>
            <person name="Jackson P.J."/>
            <person name="Keim P."/>
            <person name="Kewalramani A.R."/>
            <person name="Longmire J."/>
            <person name="Lucas S."/>
            <person name="Malfatti S."/>
            <person name="McMurry K."/>
            <person name="Meincke L.J."/>
            <person name="Misra M."/>
            <person name="Moseman B.L."/>
            <person name="Mundt M."/>
            <person name="Munk A.C."/>
            <person name="Okinaka R.T."/>
            <person name="Parson-Quintana B."/>
            <person name="Reilly L.P."/>
            <person name="Richardson P."/>
            <person name="Robinson D.L."/>
            <person name="Rubin E."/>
            <person name="Saunders E."/>
            <person name="Tapia R."/>
            <person name="Tesmer J.G."/>
            <person name="Thayer N."/>
            <person name="Thompson L.S."/>
            <person name="Tice H."/>
            <person name="Ticknor L.O."/>
            <person name="Wills P.L."/>
            <person name="Brettin T.S."/>
            <person name="Gilna P."/>
        </authorList>
    </citation>
    <scope>NUCLEOTIDE SEQUENCE [LARGE SCALE GENOMIC DNA]</scope>
    <source>
        <strain>97-27</strain>
    </source>
</reference>
<sequence length="293" mass="32672">MEITFQKVEHRYQYKTPFERRALYDVDVSFPSGGYYAIIGHTGSGKSTMIQHLNGLLQPTNGTVQIGEHFISAGKKEKKLKPLRKKVGVVFQFPEHQLFEETVEKDICFGPTNFGVSEEAAKQKAREAIELVGLEPELLARSPFELSGGQMRRVAIAGVLAMEPEVLVLDEPTAGLDPKGQNELMEMFYKLHKEKGLTVILVTHNMEDAAKYAEQIVVMHKGTVFLQGSAEEVFSHADELEKIGVDLPMSLKYKRAIEEKFGISIPKATLSLEDLTHEVVQVLRKGGHESCSS</sequence>
<name>ECFA2_BACHK</name>
<proteinExistence type="inferred from homology"/>
<evidence type="ECO:0000255" key="1">
    <source>
        <dbReference type="HAMAP-Rule" id="MF_01710"/>
    </source>
</evidence>
<comment type="function">
    <text evidence="1">ATP-binding (A) component of a common energy-coupling factor (ECF) ABC-transporter complex. Unlike classic ABC transporters this ECF transporter provides the energy necessary to transport a number of different substrates.</text>
</comment>
<comment type="subunit">
    <text evidence="1">Forms a stable energy-coupling factor (ECF) transporter complex composed of 2 membrane-embedded substrate-binding proteins (S component), 2 ATP-binding proteins (A component) and 2 transmembrane proteins (T component).</text>
</comment>
<comment type="subcellular location">
    <subcellularLocation>
        <location evidence="1">Cell membrane</location>
        <topology evidence="1">Peripheral membrane protein</topology>
    </subcellularLocation>
</comment>
<comment type="similarity">
    <text evidence="1">Belongs to the ABC transporter superfamily. Energy-coupling factor EcfA family.</text>
</comment>